<protein>
    <recommendedName>
        <fullName evidence="1">Thymidylate synthase</fullName>
        <shortName evidence="1">TS</shortName>
        <shortName evidence="1">TSase</shortName>
        <ecNumber evidence="1">2.1.1.45</ecNumber>
    </recommendedName>
</protein>
<gene>
    <name evidence="1" type="primary">thyA</name>
    <name type="ordered locus">ABO_2344</name>
</gene>
<name>TYSY_ALCBS</name>
<organism>
    <name type="scientific">Alcanivorax borkumensis (strain ATCC 700651 / DSM 11573 / NCIMB 13689 / SK2)</name>
    <dbReference type="NCBI Taxonomy" id="393595"/>
    <lineage>
        <taxon>Bacteria</taxon>
        <taxon>Pseudomonadati</taxon>
        <taxon>Pseudomonadota</taxon>
        <taxon>Gammaproteobacteria</taxon>
        <taxon>Oceanospirillales</taxon>
        <taxon>Alcanivoracaceae</taxon>
        <taxon>Alcanivorax</taxon>
    </lineage>
</organism>
<sequence>MKQYLDLLRHVREHGTYKEDRTGTGTYAVFGYQMRYDLSQGFPMLTTKKLHLRSIIHELLWFLSGDTNIRYLKENGVSIWDGWATPEGELGPVYGEQWRSWKTADGGVIDQITEVLKEIKRNPDSRRLVVSAWNPAVLPDPSISPDANAAAGKQALPPCHCLFQFYVADGKLSCQLYQRSGDIFLGVPFNIASYALLTLMMAQVCDLQPGDFVHTLGDAHLYSNHLEQADTQLARTPGPLPTMTLNPAVKDLFAFTFDDFTVSNYNPDAHIKAPVAI</sequence>
<comment type="function">
    <text evidence="1">Catalyzes the reductive methylation of 2'-deoxyuridine-5'-monophosphate (dUMP) to 2'-deoxythymidine-5'-monophosphate (dTMP) while utilizing 5,10-methylenetetrahydrofolate (mTHF) as the methyl donor and reductant in the reaction, yielding dihydrofolate (DHF) as a by-product. This enzymatic reaction provides an intracellular de novo source of dTMP, an essential precursor for DNA biosynthesis.</text>
</comment>
<comment type="catalytic activity">
    <reaction evidence="1">
        <text>dUMP + (6R)-5,10-methylene-5,6,7,8-tetrahydrofolate = 7,8-dihydrofolate + dTMP</text>
        <dbReference type="Rhea" id="RHEA:12104"/>
        <dbReference type="ChEBI" id="CHEBI:15636"/>
        <dbReference type="ChEBI" id="CHEBI:57451"/>
        <dbReference type="ChEBI" id="CHEBI:63528"/>
        <dbReference type="ChEBI" id="CHEBI:246422"/>
        <dbReference type="EC" id="2.1.1.45"/>
    </reaction>
</comment>
<comment type="pathway">
    <text evidence="1">Pyrimidine metabolism; dTTP biosynthesis.</text>
</comment>
<comment type="subunit">
    <text evidence="1">Homodimer.</text>
</comment>
<comment type="subcellular location">
    <subcellularLocation>
        <location evidence="1">Cytoplasm</location>
    </subcellularLocation>
</comment>
<comment type="similarity">
    <text evidence="1">Belongs to the thymidylate synthase family. Bacterial-type ThyA subfamily.</text>
</comment>
<proteinExistence type="inferred from homology"/>
<feature type="chain" id="PRO_1000000571" description="Thymidylate synthase">
    <location>
        <begin position="1"/>
        <end position="277"/>
    </location>
</feature>
<feature type="active site" description="Nucleophile" evidence="1">
    <location>
        <position position="159"/>
    </location>
</feature>
<feature type="binding site" description="in other chain" evidence="1">
    <location>
        <position position="21"/>
    </location>
    <ligand>
        <name>dUMP</name>
        <dbReference type="ChEBI" id="CHEBI:246422"/>
        <note>ligand shared between dimeric partners</note>
    </ligand>
</feature>
<feature type="binding site" evidence="1">
    <location>
        <position position="51"/>
    </location>
    <ligand>
        <name>(6R)-5,10-methylene-5,6,7,8-tetrahydrofolate</name>
        <dbReference type="ChEBI" id="CHEBI:15636"/>
    </ligand>
</feature>
<feature type="binding site" evidence="1">
    <location>
        <begin position="126"/>
        <end position="127"/>
    </location>
    <ligand>
        <name>dUMP</name>
        <dbReference type="ChEBI" id="CHEBI:246422"/>
        <note>ligand shared between dimeric partners</note>
    </ligand>
</feature>
<feature type="binding site" description="in other chain" evidence="1">
    <location>
        <begin position="179"/>
        <end position="182"/>
    </location>
    <ligand>
        <name>dUMP</name>
        <dbReference type="ChEBI" id="CHEBI:246422"/>
        <note>ligand shared between dimeric partners</note>
    </ligand>
</feature>
<feature type="binding site" evidence="1">
    <location>
        <position position="182"/>
    </location>
    <ligand>
        <name>(6R)-5,10-methylene-5,6,7,8-tetrahydrofolate</name>
        <dbReference type="ChEBI" id="CHEBI:15636"/>
    </ligand>
</feature>
<feature type="binding site" description="in other chain" evidence="1">
    <location>
        <position position="190"/>
    </location>
    <ligand>
        <name>dUMP</name>
        <dbReference type="ChEBI" id="CHEBI:246422"/>
        <note>ligand shared between dimeric partners</note>
    </ligand>
</feature>
<feature type="binding site" description="in other chain" evidence="1">
    <location>
        <begin position="220"/>
        <end position="222"/>
    </location>
    <ligand>
        <name>dUMP</name>
        <dbReference type="ChEBI" id="CHEBI:246422"/>
        <note>ligand shared between dimeric partners</note>
    </ligand>
</feature>
<feature type="binding site" evidence="1">
    <location>
        <position position="276"/>
    </location>
    <ligand>
        <name>(6R)-5,10-methylene-5,6,7,8-tetrahydrofolate</name>
        <dbReference type="ChEBI" id="CHEBI:15636"/>
    </ligand>
</feature>
<reference key="1">
    <citation type="journal article" date="2006" name="Nat. Biotechnol.">
        <title>Genome sequence of the ubiquitous hydrocarbon-degrading marine bacterium Alcanivorax borkumensis.</title>
        <authorList>
            <person name="Schneiker S."/>
            <person name="Martins dos Santos V.A.P."/>
            <person name="Bartels D."/>
            <person name="Bekel T."/>
            <person name="Brecht M."/>
            <person name="Buhrmester J."/>
            <person name="Chernikova T.N."/>
            <person name="Denaro R."/>
            <person name="Ferrer M."/>
            <person name="Gertler C."/>
            <person name="Goesmann A."/>
            <person name="Golyshina O.V."/>
            <person name="Kaminski F."/>
            <person name="Khachane A.N."/>
            <person name="Lang S."/>
            <person name="Linke B."/>
            <person name="McHardy A.C."/>
            <person name="Meyer F."/>
            <person name="Nechitaylo T."/>
            <person name="Puehler A."/>
            <person name="Regenhardt D."/>
            <person name="Rupp O."/>
            <person name="Sabirova J.S."/>
            <person name="Selbitschka W."/>
            <person name="Yakimov M.M."/>
            <person name="Timmis K.N."/>
            <person name="Vorhoelter F.-J."/>
            <person name="Weidner S."/>
            <person name="Kaiser O."/>
            <person name="Golyshin P.N."/>
        </authorList>
    </citation>
    <scope>NUCLEOTIDE SEQUENCE [LARGE SCALE GENOMIC DNA]</scope>
    <source>
        <strain>ATCC 700651 / DSM 11573 / NCIMB 13689 / SK2</strain>
    </source>
</reference>
<accession>Q0VM06</accession>
<dbReference type="EC" id="2.1.1.45" evidence="1"/>
<dbReference type="EMBL" id="AM286690">
    <property type="protein sequence ID" value="CAL17792.1"/>
    <property type="molecule type" value="Genomic_DNA"/>
</dbReference>
<dbReference type="RefSeq" id="WP_011589618.1">
    <property type="nucleotide sequence ID" value="NC_008260.1"/>
</dbReference>
<dbReference type="SMR" id="Q0VM06"/>
<dbReference type="STRING" id="393595.ABO_2344"/>
<dbReference type="KEGG" id="abo:ABO_2344"/>
<dbReference type="eggNOG" id="COG0207">
    <property type="taxonomic scope" value="Bacteria"/>
</dbReference>
<dbReference type="HOGENOM" id="CLU_021669_0_0_6"/>
<dbReference type="OrthoDB" id="9774633at2"/>
<dbReference type="UniPathway" id="UPA00575"/>
<dbReference type="Proteomes" id="UP000008871">
    <property type="component" value="Chromosome"/>
</dbReference>
<dbReference type="GO" id="GO:0005829">
    <property type="term" value="C:cytosol"/>
    <property type="evidence" value="ECO:0007669"/>
    <property type="project" value="TreeGrafter"/>
</dbReference>
<dbReference type="GO" id="GO:0004799">
    <property type="term" value="F:thymidylate synthase activity"/>
    <property type="evidence" value="ECO:0007669"/>
    <property type="project" value="UniProtKB-UniRule"/>
</dbReference>
<dbReference type="GO" id="GO:0006231">
    <property type="term" value="P:dTMP biosynthetic process"/>
    <property type="evidence" value="ECO:0007669"/>
    <property type="project" value="UniProtKB-UniRule"/>
</dbReference>
<dbReference type="GO" id="GO:0006235">
    <property type="term" value="P:dTTP biosynthetic process"/>
    <property type="evidence" value="ECO:0007669"/>
    <property type="project" value="UniProtKB-UniRule"/>
</dbReference>
<dbReference type="GO" id="GO:0032259">
    <property type="term" value="P:methylation"/>
    <property type="evidence" value="ECO:0007669"/>
    <property type="project" value="UniProtKB-KW"/>
</dbReference>
<dbReference type="CDD" id="cd00351">
    <property type="entry name" value="TS_Pyrimidine_HMase"/>
    <property type="match status" value="1"/>
</dbReference>
<dbReference type="FunFam" id="3.30.572.10:FF:000013">
    <property type="entry name" value="Thymidylate synthase"/>
    <property type="match status" value="1"/>
</dbReference>
<dbReference type="Gene3D" id="3.30.572.10">
    <property type="entry name" value="Thymidylate synthase/dCMP hydroxymethylase domain"/>
    <property type="match status" value="1"/>
</dbReference>
<dbReference type="HAMAP" id="MF_00008">
    <property type="entry name" value="Thymidy_synth_bact"/>
    <property type="match status" value="1"/>
</dbReference>
<dbReference type="InterPro" id="IPR045097">
    <property type="entry name" value="Thymidate_synth/dCMP_Mease"/>
</dbReference>
<dbReference type="InterPro" id="IPR023451">
    <property type="entry name" value="Thymidate_synth/dCMP_Mease_dom"/>
</dbReference>
<dbReference type="InterPro" id="IPR036926">
    <property type="entry name" value="Thymidate_synth/dCMP_Mease_sf"/>
</dbReference>
<dbReference type="InterPro" id="IPR000398">
    <property type="entry name" value="Thymidylate_synthase"/>
</dbReference>
<dbReference type="NCBIfam" id="NF002497">
    <property type="entry name" value="PRK01827.1-3"/>
    <property type="match status" value="1"/>
</dbReference>
<dbReference type="NCBIfam" id="NF002499">
    <property type="entry name" value="PRK01827.1-5"/>
    <property type="match status" value="1"/>
</dbReference>
<dbReference type="NCBIfam" id="TIGR03284">
    <property type="entry name" value="thym_sym"/>
    <property type="match status" value="2"/>
</dbReference>
<dbReference type="PANTHER" id="PTHR11548:SF9">
    <property type="entry name" value="THYMIDYLATE SYNTHASE"/>
    <property type="match status" value="1"/>
</dbReference>
<dbReference type="PANTHER" id="PTHR11548">
    <property type="entry name" value="THYMIDYLATE SYNTHASE 1"/>
    <property type="match status" value="1"/>
</dbReference>
<dbReference type="Pfam" id="PF00303">
    <property type="entry name" value="Thymidylat_synt"/>
    <property type="match status" value="1"/>
</dbReference>
<dbReference type="PRINTS" id="PR00108">
    <property type="entry name" value="THYMDSNTHASE"/>
</dbReference>
<dbReference type="SUPFAM" id="SSF55831">
    <property type="entry name" value="Thymidylate synthase/dCMP hydroxymethylase"/>
    <property type="match status" value="1"/>
</dbReference>
<keyword id="KW-0963">Cytoplasm</keyword>
<keyword id="KW-0489">Methyltransferase</keyword>
<keyword id="KW-0545">Nucleotide biosynthesis</keyword>
<keyword id="KW-1185">Reference proteome</keyword>
<keyword id="KW-0808">Transferase</keyword>
<evidence type="ECO:0000255" key="1">
    <source>
        <dbReference type="HAMAP-Rule" id="MF_00008"/>
    </source>
</evidence>